<proteinExistence type="evidence at protein level"/>
<keyword id="KW-0217">Developmental protein</keyword>
<keyword id="KW-1015">Disulfide bond</keyword>
<keyword id="KW-0272">Extracellular matrix</keyword>
<keyword id="KW-0325">Glycoprotein</keyword>
<keyword id="KW-0449">Lipoprotein</keyword>
<keyword id="KW-1185">Reference proteome</keyword>
<keyword id="KW-0964">Secreted</keyword>
<keyword id="KW-0732">Signal</keyword>
<keyword id="KW-0879">Wnt signaling pathway</keyword>
<comment type="function">
    <text evidence="10 11 12">Ligand for members of the frizzled family of seven transmembrane receptors (Probable). Functions in the canonical Wnt signaling pathway that results in activation of transcription factors of the TCF/LEF family (PubMed:26902720). Required for normal embryonic mesoderm development and formation of caudal somites (PubMed:8299937). Required for normal morphogenesis of the developing neural tube (PubMed:8299937). Mediates self-renewal of the stem cells at the bottom on intestinal crypts (in vitro) (PubMed:26902720).</text>
</comment>
<comment type="subunit">
    <text evidence="2 4 7 9 10">Forms a soluble 1:1 complex with AFM; this prevents oligomerization and is required for prolonged biological activity (PubMed:26902720). The complex with AFM may represent the physiological form in body fluids (PubMed:26902720). Homooligomer; disulfide-linked, leading to inactivation (PubMed:25771893). Interacts with APCDD1 and WLS. Component of the Wnt-Fzd-LRP5-LRP6 signaling complex that contains a WNT protein, a FZD protein and LRP5 or LRP6. Interacts directly in the complex with LRP6 (By similarity). Interacts with PORCN (PubMed:10866835). Interacts with glypican GPC3 (By similarity). Interacts with PKD1 (via extracellular domain) (By similarity). Interacts with FZD5 (By similarity).</text>
</comment>
<comment type="interaction">
    <interactant intactId="EBI-2899665">
        <id>P27467</id>
    </interactant>
    <interactant intactId="EBI-6171689">
        <id>Q61091</id>
        <label>Fzd8</label>
    </interactant>
    <organismsDiffer>false</organismsDiffer>
    <experiments>7</experiments>
</comment>
<comment type="interaction">
    <interactant intactId="EBI-2899665">
        <id>P27467</id>
    </interactant>
    <interactant intactId="EBI-8183885">
        <id>E9Q612</id>
        <label>Ptpro</label>
    </interactant>
    <organismsDiffer>false</organismsDiffer>
    <experiments>2</experiments>
</comment>
<comment type="interaction">
    <interactant intactId="EBI-2899665">
        <id>P27467</id>
    </interactant>
    <interactant intactId="EBI-2899665">
        <id>P27467</id>
        <label>Wnt3a</label>
    </interactant>
    <organismsDiffer>false</organismsDiffer>
    <experiments>2</experiments>
</comment>
<comment type="interaction">
    <interactant intactId="EBI-2899665">
        <id>P27467</id>
    </interactant>
    <interactant intactId="EBI-22052138">
        <id>G3MYZ3</id>
        <label>AFM</label>
    </interactant>
    <organismsDiffer>true</organismsDiffer>
    <experiments>3</experiments>
</comment>
<comment type="interaction">
    <interactant intactId="EBI-2899665">
        <id>P27467</id>
    </interactant>
    <interactant intactId="EBI-20737924">
        <id>P43652</id>
        <label>AFM</label>
    </interactant>
    <organismsDiffer>true</organismsDiffer>
    <experiments>3</experiments>
</comment>
<comment type="interaction">
    <interactant intactId="EBI-2899665">
        <id>P27467</id>
    </interactant>
    <interactant intactId="EBI-910915">
        <id>O75581</id>
        <label>LRP6</label>
    </interactant>
    <organismsDiffer>true</organismsDiffer>
    <experiments>4</experiments>
</comment>
<comment type="interaction">
    <interactant intactId="EBI-2899665">
        <id>P27467</id>
    </interactant>
    <interactant intactId="EBI-6257471">
        <id>A6NFA1</id>
        <label>TRABD2B</label>
    </interactant>
    <organismsDiffer>true</organismsDiffer>
    <experiments>2</experiments>
</comment>
<comment type="interaction">
    <interactant intactId="EBI-2899665">
        <id>P27467</id>
    </interactant>
    <interactant intactId="EBI-3922719">
        <id>Q9Y5W5</id>
        <label>WIF1</label>
    </interactant>
    <organismsDiffer>true</organismsDiffer>
    <experiments>8</experiments>
</comment>
<comment type="subcellular location">
    <subcellularLocation>
        <location evidence="12">Secreted</location>
        <location evidence="12">Extracellular space</location>
        <location evidence="12">Extracellular matrix</location>
    </subcellularLocation>
    <subcellularLocation>
        <location evidence="5 10">Secreted</location>
    </subcellularLocation>
</comment>
<comment type="tissue specificity">
    <text evidence="6">Dorsal portion of the neural tube (developing roof plate), and mesenchyme tissue surrounding the umbilical veins.</text>
</comment>
<comment type="developmental stage">
    <text evidence="11">Detected in the dorsal primitive streak region at 8.5 dpc. Detected in the tailbud region and in the developing central nervous system (CNS) at 9.5 dpc.</text>
</comment>
<comment type="PTM">
    <text evidence="7">Proteolytic processing by TIKI1 and TIKI2 promotes oxidation and formation of large disulfide-bond oligomers, leading to inactivation of WNT3A.</text>
</comment>
<comment type="PTM">
    <text evidence="7">Disulfide bonds have critical and distinct roles in secretion and activity. Loss of each conserved cysteine in WNT3A results in high molecular weight oxidized Wnt oligomers, which are formed through inter-Wnt disulfide bonding.</text>
</comment>
<comment type="PTM">
    <text evidence="2 5 8 9">Palmitoleoylation by PORCN is required for efficient binding to frizzled receptors. Palmitoleoylation is required for proper trafficking to cell surface, vacuolar acidification is critical to release palmitoleoylated WNT3A from WLS in secretory vesicles (PubMed:17141155, PubMed:24798332). Depalmitoleoylated by NOTUM, leading to inhibit Wnt signaling pathway, possibly by promoting disulfide bond formation and oligomerization (PubMed:25771893).</text>
</comment>
<comment type="miscellaneous">
    <text evidence="11">Gene targeting that leads to the production of a truncated mRNA causes full embryonic lethality at 10.5 to 12.5 dpc.</text>
</comment>
<comment type="similarity">
    <text evidence="12">Belongs to the Wnt family.</text>
</comment>
<comment type="caution">
    <text evidence="9 10">The formation of disulfide-linked oligomers may be an artifact that occurs upon heterologous expression in vitro (PubMed:25771893, PubMed:26902720). Formation of disulfide-linked oligomers is not observed when the protein is coexpressed with AFM (PubMed:26902720).</text>
</comment>
<comment type="caution">
    <text>A palmitoylation site was proposed at Cys-77, but it was later shown that this cysteine is engaged in a disulfide bond.</text>
</comment>
<reference key="1">
    <citation type="journal article" date="1991" name="Genes Dev.">
        <title>Expression of two members of the Wnt family during mouse development -- restricted temporal and spatial patterns in the developing neural tube.</title>
        <authorList>
            <person name="Roelink H."/>
            <person name="Nusse R."/>
        </authorList>
    </citation>
    <scope>NUCLEOTIDE SEQUENCE [MRNA]</scope>
    <scope>TISSUE SPECIFICITY</scope>
    <source>
        <tissue>Embryo</tissue>
    </source>
</reference>
<reference key="2">
    <citation type="journal article" date="1994" name="Genes Dev.">
        <title>Wnt-3a regulates somite and tailbud formation in the mouse embryo.</title>
        <authorList>
            <person name="Takada S."/>
            <person name="Stark K.L."/>
            <person name="Shea M.J."/>
            <person name="Vassileva G."/>
            <person name="McMahon J.A."/>
            <person name="McMahon A.P."/>
        </authorList>
    </citation>
    <scope>FUNCTION</scope>
    <scope>DEVELOPMENTAL STAGE</scope>
</reference>
<reference key="3">
    <citation type="journal article" date="2000" name="Eur. J. Biochem.">
        <title>The evolutionarily conserved porcupine gene family is involved in the processing of the Wnt family.</title>
        <authorList>
            <person name="Tanaka K."/>
            <person name="Okabayashi H."/>
            <person name="Asashima M."/>
            <person name="Perrimon N."/>
            <person name="Kadowaki T."/>
        </authorList>
    </citation>
    <scope>INTERACTION WITH PORCN</scope>
</reference>
<reference key="4">
    <citation type="journal article" date="2003" name="Nature">
        <title>Wnt proteins are lipid-modified and can act as stem cell growth factors.</title>
        <authorList>
            <person name="Willert K."/>
            <person name="Brown J.D."/>
            <person name="Danenberg E."/>
            <person name="Duncan A.W."/>
            <person name="Weissman I.L."/>
            <person name="Reya T."/>
            <person name="Yates J.R. III"/>
            <person name="Nusse R."/>
        </authorList>
    </citation>
    <scope>PRELIMINARY CYSTEINE PALMITOYLATION</scope>
</reference>
<reference key="5">
    <citation type="journal article" date="2012" name="Cell">
        <title>Tiki1 is required for head formation via Wnt cleavage-oxidation and inactivation.</title>
        <authorList>
            <person name="Zhang X."/>
            <person name="Abreu J.G."/>
            <person name="Yokota C."/>
            <person name="Macdonald B.T."/>
            <person name="Singh S."/>
            <person name="Coburn K.L."/>
            <person name="Cheong S.M."/>
            <person name="Zhang M.M."/>
            <person name="Ye Q.Z."/>
            <person name="Hang H.C."/>
            <person name="Steen H."/>
            <person name="He X."/>
        </authorList>
    </citation>
    <scope>PROTEOLYTIC PROCESSING BY TIKI1 AND TIKI2</scope>
    <scope>DISULFIDE BONDS</scope>
    <scope>SUBUNIT</scope>
    <scope>MUTAGENESIS OF 25-SER-LEU-26; 33-SER-SER-34 AND CYS-77</scope>
</reference>
<reference key="6">
    <citation type="journal article" date="2006" name="Dev. Cell">
        <title>Monounsaturated fatty acid modification of Wnt protein: its role in Wnt secretion.</title>
        <authorList>
            <person name="Takada R."/>
            <person name="Satomi Y."/>
            <person name="Kurata T."/>
            <person name="Ueno N."/>
            <person name="Norioka S."/>
            <person name="Kondoh H."/>
            <person name="Takao T."/>
            <person name="Takada S."/>
        </authorList>
    </citation>
    <scope>PALMITOLEOYLATION AT SER-209</scope>
    <scope>SUBCELLULAR LOCATION</scope>
    <scope>MUTAGENESIS OF CYS-77; SER-209; SER-211; THR-216; SER-277 AND THR-292</scope>
    <scope>GLYCOSYLATION</scope>
</reference>
<reference key="7">
    <citation type="journal article" date="2014" name="J. Biol. Chem.">
        <title>Identification of key residues and regions important for porcupine-mediated Wnt acylation.</title>
        <authorList>
            <person name="Rios-Esteves J."/>
            <person name="Haugen B."/>
            <person name="Resh M.D."/>
        </authorList>
    </citation>
    <scope>PALMITOLEOYLATION AT SER-209</scope>
</reference>
<reference key="8">
    <citation type="journal article" date="2015" name="Dev. Cell">
        <title>Notum is required for neural and head induction via Wnt deacylation, oxidation, and inactivation.</title>
        <authorList>
            <person name="Zhang X."/>
            <person name="Cheong S.M."/>
            <person name="Amado N.G."/>
            <person name="Reis A.H."/>
            <person name="MacDonald B.T."/>
            <person name="Zebisch M."/>
            <person name="Jones E.Y."/>
            <person name="Abreu J.G."/>
            <person name="He X."/>
        </authorList>
    </citation>
    <scope>SUBUNIT</scope>
    <scope>PALMITOLEOYLATION AT SER-209</scope>
    <scope>DEPALMITOLEOYLATION AT SER-209</scope>
    <scope>MUTAGENESIS OF SER-209</scope>
</reference>
<reference key="9">
    <citation type="journal article" date="2016" name="Elife">
        <title>Active and water-soluble form of lipidated Wnt protein is maintained by a serum glycoprotein afamin/alpha-albumin.</title>
        <authorList>
            <person name="Mihara E."/>
            <person name="Hirai H."/>
            <person name="Yamamoto H."/>
            <person name="Tamura-Kawakami K."/>
            <person name="Matano M."/>
            <person name="Kikuchi A."/>
            <person name="Sato T."/>
            <person name="Takagi J."/>
        </authorList>
    </citation>
    <scope>FUNCTION</scope>
    <scope>SUBCELLULAR LOCATION</scope>
    <scope>INTERACTION WITH AFM</scope>
</reference>
<feature type="signal peptide" evidence="3">
    <location>
        <begin position="1"/>
        <end position="18"/>
    </location>
</feature>
<feature type="chain" id="PRO_0000041419" description="Protein Wnt-3a">
    <location>
        <begin position="19"/>
        <end position="352"/>
    </location>
</feature>
<feature type="site" description="Cleavage; by TIKI1 and TIKI2" evidence="7">
    <location>
        <begin position="26"/>
        <end position="27"/>
    </location>
</feature>
<feature type="lipid moiety-binding region" description="O-palmitoleoyl serine; by PORCN" evidence="5 8 9">
    <location>
        <position position="209"/>
    </location>
</feature>
<feature type="glycosylation site" description="N-linked (GlcNAc...) asparagine" evidence="3">
    <location>
        <position position="87"/>
    </location>
</feature>
<feature type="glycosylation site" description="N-linked (GlcNAc...) asparagine" evidence="3">
    <location>
        <position position="298"/>
    </location>
</feature>
<feature type="disulfide bond" evidence="1">
    <location>
        <begin position="77"/>
        <end position="88"/>
    </location>
</feature>
<feature type="disulfide bond" evidence="1">
    <location>
        <begin position="128"/>
        <end position="136"/>
    </location>
</feature>
<feature type="disulfide bond" evidence="1">
    <location>
        <begin position="138"/>
        <end position="155"/>
    </location>
</feature>
<feature type="disulfide bond" evidence="1">
    <location>
        <begin position="203"/>
        <end position="217"/>
    </location>
</feature>
<feature type="disulfide bond" evidence="1">
    <location>
        <begin position="205"/>
        <end position="212"/>
    </location>
</feature>
<feature type="disulfide bond" evidence="1">
    <location>
        <begin position="281"/>
        <end position="312"/>
    </location>
</feature>
<feature type="disulfide bond" evidence="1">
    <location>
        <begin position="297"/>
        <end position="307"/>
    </location>
</feature>
<feature type="disulfide bond" evidence="1">
    <location>
        <begin position="311"/>
        <end position="351"/>
    </location>
</feature>
<feature type="disulfide bond" evidence="1">
    <location>
        <begin position="327"/>
        <end position="342"/>
    </location>
</feature>
<feature type="disulfide bond" evidence="1">
    <location>
        <begin position="329"/>
        <end position="339"/>
    </location>
</feature>
<feature type="disulfide bond" evidence="1">
    <location>
        <begin position="334"/>
        <end position="335"/>
    </location>
</feature>
<feature type="mutagenesis site" description="Partially resistant to proteolysis by TIKI1 and TIKI2. Completely resistant to proteolysis by TIKI1 and TIKI2; when associated with 33-D-D-34." evidence="7">
    <original>SL</original>
    <variation>DD</variation>
    <location>
        <begin position="25"/>
        <end position="26"/>
    </location>
</feature>
<feature type="mutagenesis site" description="Completely resistant to proteolysis by TIKI1 and TIKI2; when associated with 25-D-D-26." evidence="7">
    <original>SS</original>
    <variation>DD</variation>
    <location>
        <begin position="33"/>
        <end position="34"/>
    </location>
</feature>
<feature type="mutagenesis site" description="Forms oxidized oligomers regardless of TIKI2. Does not affect palmitoleoylation." evidence="5 7">
    <original>C</original>
    <variation>A</variation>
    <location>
        <position position="77"/>
    </location>
</feature>
<feature type="mutagenesis site" description="Abolishes palmitoleoylation, promoting formation of disulfide bonds and oligomerization." evidence="5 9">
    <original>S</original>
    <variation>A</variation>
    <location>
        <position position="209"/>
    </location>
</feature>
<feature type="mutagenesis site" description="Does not affect palmitoleoylation." evidence="5">
    <original>S</original>
    <variation>A</variation>
    <location>
        <position position="211"/>
    </location>
</feature>
<feature type="mutagenesis site" description="Does not affect palmitoleoylation." evidence="5">
    <original>T</original>
    <variation>A</variation>
    <location>
        <position position="216"/>
    </location>
</feature>
<feature type="mutagenesis site" description="Does not affect palmitoleoylation." evidence="5">
    <original>S</original>
    <variation>A</variation>
    <location>
        <position position="277"/>
    </location>
</feature>
<feature type="mutagenesis site" description="Does not affect palmitoleoylation." evidence="5">
    <original>T</original>
    <variation>A</variation>
    <location>
        <position position="292"/>
    </location>
</feature>
<accession>P27467</accession>
<organism>
    <name type="scientific">Mus musculus</name>
    <name type="common">Mouse</name>
    <dbReference type="NCBI Taxonomy" id="10090"/>
    <lineage>
        <taxon>Eukaryota</taxon>
        <taxon>Metazoa</taxon>
        <taxon>Chordata</taxon>
        <taxon>Craniata</taxon>
        <taxon>Vertebrata</taxon>
        <taxon>Euteleostomi</taxon>
        <taxon>Mammalia</taxon>
        <taxon>Eutheria</taxon>
        <taxon>Euarchontoglires</taxon>
        <taxon>Glires</taxon>
        <taxon>Rodentia</taxon>
        <taxon>Myomorpha</taxon>
        <taxon>Muroidea</taxon>
        <taxon>Muridae</taxon>
        <taxon>Murinae</taxon>
        <taxon>Mus</taxon>
        <taxon>Mus</taxon>
    </lineage>
</organism>
<dbReference type="EMBL" id="X56842">
    <property type="protein sequence ID" value="CAA40173.1"/>
    <property type="molecule type" value="mRNA"/>
</dbReference>
<dbReference type="CCDS" id="CCDS24766.1"/>
<dbReference type="PIR" id="A39532">
    <property type="entry name" value="A39532"/>
</dbReference>
<dbReference type="RefSeq" id="NP_033548.1">
    <property type="nucleotide sequence ID" value="NM_009522.3"/>
</dbReference>
<dbReference type="SMR" id="P27467"/>
<dbReference type="BioGRID" id="204575">
    <property type="interactions" value="9"/>
</dbReference>
<dbReference type="DIP" id="DIP-55954N"/>
<dbReference type="ELM" id="P27467"/>
<dbReference type="FunCoup" id="P27467">
    <property type="interactions" value="381"/>
</dbReference>
<dbReference type="IntAct" id="P27467">
    <property type="interactions" value="11"/>
</dbReference>
<dbReference type="MINT" id="P27467"/>
<dbReference type="STRING" id="10090.ENSMUSP00000010044"/>
<dbReference type="BindingDB" id="P27467"/>
<dbReference type="ChEMBL" id="CHEMBL5617"/>
<dbReference type="GlyCosmos" id="P27467">
    <property type="glycosylation" value="2 sites, No reported glycans"/>
</dbReference>
<dbReference type="GlyGen" id="P27467">
    <property type="glycosylation" value="2 sites"/>
</dbReference>
<dbReference type="PhosphoSitePlus" id="P27467"/>
<dbReference type="SwissPalm" id="P27467"/>
<dbReference type="PaxDb" id="10090-ENSMUSP00000010044"/>
<dbReference type="PeptideAtlas" id="P27467"/>
<dbReference type="Antibodypedia" id="34658">
    <property type="antibodies" value="602 antibodies from 36 providers"/>
</dbReference>
<dbReference type="DNASU" id="22416"/>
<dbReference type="Ensembl" id="ENSMUST00000010044.8">
    <property type="protein sequence ID" value="ENSMUSP00000010044.8"/>
    <property type="gene ID" value="ENSMUSG00000009900.8"/>
</dbReference>
<dbReference type="GeneID" id="22416"/>
<dbReference type="KEGG" id="mmu:22416"/>
<dbReference type="UCSC" id="uc007jdp.2">
    <property type="organism name" value="mouse"/>
</dbReference>
<dbReference type="AGR" id="MGI:98956"/>
<dbReference type="CTD" id="89780"/>
<dbReference type="MGI" id="MGI:98956">
    <property type="gene designation" value="Wnt3a"/>
</dbReference>
<dbReference type="VEuPathDB" id="HostDB:ENSMUSG00000009900"/>
<dbReference type="eggNOG" id="KOG3913">
    <property type="taxonomic scope" value="Eukaryota"/>
</dbReference>
<dbReference type="GeneTree" id="ENSGT00940000160510"/>
<dbReference type="HOGENOM" id="CLU_033039_1_0_1"/>
<dbReference type="InParanoid" id="P27467"/>
<dbReference type="OMA" id="GLTHVMA"/>
<dbReference type="OrthoDB" id="5945655at2759"/>
<dbReference type="PhylomeDB" id="P27467"/>
<dbReference type="TreeFam" id="TF105310"/>
<dbReference type="Reactome" id="R-MMU-201681">
    <property type="pathway name" value="TCF dependent signaling in response to WNT"/>
</dbReference>
<dbReference type="Reactome" id="R-MMU-3238698">
    <property type="pathway name" value="WNT ligand biogenesis and trafficking"/>
</dbReference>
<dbReference type="Reactome" id="R-MMU-4641262">
    <property type="pathway name" value="Disassembly of the destruction complex and recruitment of AXIN to the membrane"/>
</dbReference>
<dbReference type="Reactome" id="R-MMU-4641263">
    <property type="pathway name" value="Regulation of FZD by ubiquitination"/>
</dbReference>
<dbReference type="Reactome" id="R-MMU-9856649">
    <property type="pathway name" value="Transcriptional and post-translational regulation of MITF-M expression and activity"/>
</dbReference>
<dbReference type="BioGRID-ORCS" id="22416">
    <property type="hits" value="5 hits in 77 CRISPR screens"/>
</dbReference>
<dbReference type="ChiTaRS" id="Wnt3a">
    <property type="organism name" value="mouse"/>
</dbReference>
<dbReference type="PRO" id="PR:P27467"/>
<dbReference type="Proteomes" id="UP000000589">
    <property type="component" value="Chromosome 11"/>
</dbReference>
<dbReference type="RNAct" id="P27467">
    <property type="molecule type" value="protein"/>
</dbReference>
<dbReference type="Bgee" id="ENSMUSG00000009900">
    <property type="expression patterns" value="Expressed in urethra and 130 other cell types or tissues"/>
</dbReference>
<dbReference type="GO" id="GO:0009986">
    <property type="term" value="C:cell surface"/>
    <property type="evidence" value="ECO:0000314"/>
    <property type="project" value="BHF-UCL"/>
</dbReference>
<dbReference type="GO" id="GO:0005788">
    <property type="term" value="C:endoplasmic reticulum lumen"/>
    <property type="evidence" value="ECO:0000304"/>
    <property type="project" value="Reactome"/>
</dbReference>
<dbReference type="GO" id="GO:0005576">
    <property type="term" value="C:extracellular region"/>
    <property type="evidence" value="ECO:0000304"/>
    <property type="project" value="Reactome"/>
</dbReference>
<dbReference type="GO" id="GO:0005615">
    <property type="term" value="C:extracellular space"/>
    <property type="evidence" value="ECO:0000314"/>
    <property type="project" value="UniProtKB"/>
</dbReference>
<dbReference type="GO" id="GO:0098978">
    <property type="term" value="C:glutamatergic synapse"/>
    <property type="evidence" value="ECO:0000314"/>
    <property type="project" value="SynGO"/>
</dbReference>
<dbReference type="GO" id="GO:0045202">
    <property type="term" value="C:synapse"/>
    <property type="evidence" value="ECO:0000314"/>
    <property type="project" value="SynGO"/>
</dbReference>
<dbReference type="GO" id="GO:1990909">
    <property type="term" value="C:Wnt signalosome"/>
    <property type="evidence" value="ECO:0000303"/>
    <property type="project" value="ParkinsonsUK-UCL"/>
</dbReference>
<dbReference type="GO" id="GO:1990851">
    <property type="term" value="C:Wnt-Frizzled-LRP5/6 complex"/>
    <property type="evidence" value="ECO:0007669"/>
    <property type="project" value="Ensembl"/>
</dbReference>
<dbReference type="GO" id="GO:0039706">
    <property type="term" value="F:co-receptor binding"/>
    <property type="evidence" value="ECO:0007669"/>
    <property type="project" value="Ensembl"/>
</dbReference>
<dbReference type="GO" id="GO:0005109">
    <property type="term" value="F:frizzled binding"/>
    <property type="evidence" value="ECO:0000314"/>
    <property type="project" value="MGI"/>
</dbReference>
<dbReference type="GO" id="GO:0042802">
    <property type="term" value="F:identical protein binding"/>
    <property type="evidence" value="ECO:0000353"/>
    <property type="project" value="IntAct"/>
</dbReference>
<dbReference type="GO" id="GO:0019904">
    <property type="term" value="F:protein domain specific binding"/>
    <property type="evidence" value="ECO:0000353"/>
    <property type="project" value="UniProtKB"/>
</dbReference>
<dbReference type="GO" id="GO:0048018">
    <property type="term" value="F:receptor ligand activity"/>
    <property type="evidence" value="ECO:0000314"/>
    <property type="project" value="ParkinsonsUK-UCL"/>
</dbReference>
<dbReference type="GO" id="GO:0005102">
    <property type="term" value="F:signaling receptor binding"/>
    <property type="evidence" value="ECO:0000304"/>
    <property type="project" value="MGI"/>
</dbReference>
<dbReference type="GO" id="GO:0003713">
    <property type="term" value="F:transcription coactivator activity"/>
    <property type="evidence" value="ECO:0000314"/>
    <property type="project" value="UniProtKB"/>
</dbReference>
<dbReference type="GO" id="GO:0009887">
    <property type="term" value="P:animal organ morphogenesis"/>
    <property type="evidence" value="ECO:0000304"/>
    <property type="project" value="MGI"/>
</dbReference>
<dbReference type="GO" id="GO:0009952">
    <property type="term" value="P:anterior/posterior pattern specification"/>
    <property type="evidence" value="ECO:0000314"/>
    <property type="project" value="MGI"/>
</dbReference>
<dbReference type="GO" id="GO:0090245">
    <property type="term" value="P:axis elongation involved in somitogenesis"/>
    <property type="evidence" value="ECO:0000316"/>
    <property type="project" value="MGI"/>
</dbReference>
<dbReference type="GO" id="GO:0007411">
    <property type="term" value="P:axon guidance"/>
    <property type="evidence" value="ECO:0000314"/>
    <property type="project" value="MGI"/>
</dbReference>
<dbReference type="GO" id="GO:0007409">
    <property type="term" value="P:axonogenesis"/>
    <property type="evidence" value="ECO:0000314"/>
    <property type="project" value="MGI"/>
</dbReference>
<dbReference type="GO" id="GO:0042100">
    <property type="term" value="P:B cell proliferation"/>
    <property type="evidence" value="ECO:0000314"/>
    <property type="project" value="MGI"/>
</dbReference>
<dbReference type="GO" id="GO:0030509">
    <property type="term" value="P:BMP signaling pathway"/>
    <property type="evidence" value="ECO:0000266"/>
    <property type="project" value="MGI"/>
</dbReference>
<dbReference type="GO" id="GO:0090676">
    <property type="term" value="P:calcium ion transmembrane transport via low voltage-gated calcium channel"/>
    <property type="evidence" value="ECO:0000314"/>
    <property type="project" value="ParkinsonsUK-UCL"/>
</dbReference>
<dbReference type="GO" id="GO:0060070">
    <property type="term" value="P:canonical Wnt signaling pathway"/>
    <property type="evidence" value="ECO:0000314"/>
    <property type="project" value="UniProtKB"/>
</dbReference>
<dbReference type="GO" id="GO:0060923">
    <property type="term" value="P:cardiac muscle cell fate commitment"/>
    <property type="evidence" value="ECO:0000316"/>
    <property type="project" value="MGI"/>
</dbReference>
<dbReference type="GO" id="GO:0021846">
    <property type="term" value="P:cell proliferation in forebrain"/>
    <property type="evidence" value="ECO:0000314"/>
    <property type="project" value="BHF-UCL"/>
</dbReference>
<dbReference type="GO" id="GO:0033278">
    <property type="term" value="P:cell proliferation in midbrain"/>
    <property type="evidence" value="ECO:0000314"/>
    <property type="project" value="ParkinsonsUK-UCL"/>
</dbReference>
<dbReference type="GO" id="GO:0007267">
    <property type="term" value="P:cell-cell signaling"/>
    <property type="evidence" value="ECO:0000304"/>
    <property type="project" value="MGI"/>
</dbReference>
<dbReference type="GO" id="GO:0010387">
    <property type="term" value="P:COP9 signalosome assembly"/>
    <property type="evidence" value="ECO:0000314"/>
    <property type="project" value="BHF-UCL"/>
</dbReference>
<dbReference type="GO" id="GO:0007368">
    <property type="term" value="P:determination of left/right symmetry"/>
    <property type="evidence" value="ECO:0000315"/>
    <property type="project" value="MGI"/>
</dbReference>
<dbReference type="GO" id="GO:0071542">
    <property type="term" value="P:dopaminergic neuron differentiation"/>
    <property type="evidence" value="ECO:0000304"/>
    <property type="project" value="ParkinsonsUK-UCL"/>
</dbReference>
<dbReference type="GO" id="GO:0021904">
    <property type="term" value="P:dorsal/ventral neural tube patterning"/>
    <property type="evidence" value="ECO:0000315"/>
    <property type="project" value="MGI"/>
</dbReference>
<dbReference type="GO" id="GO:0030198">
    <property type="term" value="P:extracellular matrix organization"/>
    <property type="evidence" value="ECO:0000314"/>
    <property type="project" value="MGI"/>
</dbReference>
<dbReference type="GO" id="GO:0045444">
    <property type="term" value="P:fat cell differentiation"/>
    <property type="evidence" value="ECO:0000314"/>
    <property type="project" value="MGI"/>
</dbReference>
<dbReference type="GO" id="GO:0001947">
    <property type="term" value="P:heart looping"/>
    <property type="evidence" value="ECO:0000315"/>
    <property type="project" value="MGI"/>
</dbReference>
<dbReference type="GO" id="GO:0030097">
    <property type="term" value="P:hemopoiesis"/>
    <property type="evidence" value="ECO:0000314"/>
    <property type="project" value="MGI"/>
</dbReference>
<dbReference type="GO" id="GO:0021766">
    <property type="term" value="P:hippocampus development"/>
    <property type="evidence" value="ECO:0000315"/>
    <property type="project" value="MGI"/>
</dbReference>
<dbReference type="GO" id="GO:0001701">
    <property type="term" value="P:in utero embryonic development"/>
    <property type="evidence" value="ECO:0000315"/>
    <property type="project" value="MGI"/>
</dbReference>
<dbReference type="GO" id="GO:0042472">
    <property type="term" value="P:inner ear morphogenesis"/>
    <property type="evidence" value="ECO:0000316"/>
    <property type="project" value="MGI"/>
</dbReference>
<dbReference type="GO" id="GO:0030879">
    <property type="term" value="P:mammary gland development"/>
    <property type="evidence" value="ECO:0000314"/>
    <property type="project" value="MGI"/>
</dbReference>
<dbReference type="GO" id="GO:0007498">
    <property type="term" value="P:mesoderm development"/>
    <property type="evidence" value="ECO:0000315"/>
    <property type="project" value="MGI"/>
</dbReference>
<dbReference type="GO" id="GO:0030901">
    <property type="term" value="P:midbrain development"/>
    <property type="evidence" value="ECO:0000314"/>
    <property type="project" value="ParkinsonsUK-UCL"/>
</dbReference>
<dbReference type="GO" id="GO:0050804">
    <property type="term" value="P:modulation of chemical synaptic transmission"/>
    <property type="evidence" value="ECO:0000314"/>
    <property type="project" value="SynGO"/>
</dbReference>
<dbReference type="GO" id="GO:0045445">
    <property type="term" value="P:myoblast differentiation"/>
    <property type="evidence" value="ECO:0000316"/>
    <property type="project" value="MGI"/>
</dbReference>
<dbReference type="GO" id="GO:0048843">
    <property type="term" value="P:negative regulation of axon extension involved in axon guidance"/>
    <property type="evidence" value="ECO:0000314"/>
    <property type="project" value="MGI"/>
</dbReference>
<dbReference type="GO" id="GO:1904339">
    <property type="term" value="P:negative regulation of dopaminergic neuron differentiation"/>
    <property type="evidence" value="ECO:0000314"/>
    <property type="project" value="ParkinsonsUK-UCL"/>
</dbReference>
<dbReference type="GO" id="GO:0045599">
    <property type="term" value="P:negative regulation of fat cell differentiation"/>
    <property type="evidence" value="ECO:0000314"/>
    <property type="project" value="MGI"/>
</dbReference>
<dbReference type="GO" id="GO:0050768">
    <property type="term" value="P:negative regulation of neurogenesis"/>
    <property type="evidence" value="ECO:0000314"/>
    <property type="project" value="BHF-UCL"/>
</dbReference>
<dbReference type="GO" id="GO:0010977">
    <property type="term" value="P:negative regulation of neuron projection development"/>
    <property type="evidence" value="ECO:0000314"/>
    <property type="project" value="UniProtKB"/>
</dbReference>
<dbReference type="GO" id="GO:0022008">
    <property type="term" value="P:neurogenesis"/>
    <property type="evidence" value="ECO:0000314"/>
    <property type="project" value="ParkinsonsUK-UCL"/>
</dbReference>
<dbReference type="GO" id="GO:0035567">
    <property type="term" value="P:non-canonical Wnt signaling pathway"/>
    <property type="evidence" value="ECO:0000314"/>
    <property type="project" value="ParkinsonsUK-UCL"/>
</dbReference>
<dbReference type="GO" id="GO:0001649">
    <property type="term" value="P:osteoblast differentiation"/>
    <property type="evidence" value="ECO:0000316"/>
    <property type="project" value="MGI"/>
</dbReference>
<dbReference type="GO" id="GO:0048343">
    <property type="term" value="P:paraxial mesodermal cell fate commitment"/>
    <property type="evidence" value="ECO:0000315"/>
    <property type="project" value="MGI"/>
</dbReference>
<dbReference type="GO" id="GO:0030168">
    <property type="term" value="P:platelet activation"/>
    <property type="evidence" value="ECO:0000314"/>
    <property type="project" value="MGI"/>
</dbReference>
<dbReference type="GO" id="GO:0070527">
    <property type="term" value="P:platelet aggregation"/>
    <property type="evidence" value="ECO:0000314"/>
    <property type="project" value="MGI"/>
</dbReference>
<dbReference type="GO" id="GO:0030890">
    <property type="term" value="P:positive regulation of B cell proliferation"/>
    <property type="evidence" value="ECO:0000314"/>
    <property type="project" value="MGI"/>
</dbReference>
<dbReference type="GO" id="GO:0090263">
    <property type="term" value="P:positive regulation of canonical Wnt signaling pathway"/>
    <property type="evidence" value="ECO:0000314"/>
    <property type="project" value="MGI"/>
</dbReference>
<dbReference type="GO" id="GO:2000727">
    <property type="term" value="P:positive regulation of cardiac muscle cell differentiation"/>
    <property type="evidence" value="ECO:0007669"/>
    <property type="project" value="Ensembl"/>
</dbReference>
<dbReference type="GO" id="GO:0008284">
    <property type="term" value="P:positive regulation of cell population proliferation"/>
    <property type="evidence" value="ECO:0000314"/>
    <property type="project" value="MGI"/>
</dbReference>
<dbReference type="GO" id="GO:2000049">
    <property type="term" value="P:positive regulation of cell-cell adhesion mediated by cadherin"/>
    <property type="evidence" value="ECO:0000314"/>
    <property type="project" value="MGI"/>
</dbReference>
<dbReference type="GO" id="GO:0048697">
    <property type="term" value="P:positive regulation of collateral sprouting in absence of injury"/>
    <property type="evidence" value="ECO:0000314"/>
    <property type="project" value="MGI"/>
</dbReference>
<dbReference type="GO" id="GO:0001819">
    <property type="term" value="P:positive regulation of cytokine production"/>
    <property type="evidence" value="ECO:0000314"/>
    <property type="project" value="MGI"/>
</dbReference>
<dbReference type="GO" id="GO:0061184">
    <property type="term" value="P:positive regulation of dermatome development"/>
    <property type="evidence" value="ECO:0007669"/>
    <property type="project" value="Ensembl"/>
</dbReference>
<dbReference type="GO" id="GO:0045893">
    <property type="term" value="P:positive regulation of DNA-templated transcription"/>
    <property type="evidence" value="ECO:0000314"/>
    <property type="project" value="BHF-UCL"/>
</dbReference>
<dbReference type="GO" id="GO:2000347">
    <property type="term" value="P:positive regulation of hepatocyte proliferation"/>
    <property type="evidence" value="ECO:0000314"/>
    <property type="project" value="MGI"/>
</dbReference>
<dbReference type="GO" id="GO:0048337">
    <property type="term" value="P:positive regulation of mesodermal cell fate specification"/>
    <property type="evidence" value="ECO:0007669"/>
    <property type="project" value="Ensembl"/>
</dbReference>
<dbReference type="GO" id="GO:2000179">
    <property type="term" value="P:positive regulation of neural precursor cell proliferation"/>
    <property type="evidence" value="ECO:0000314"/>
    <property type="project" value="MGI"/>
</dbReference>
<dbReference type="GO" id="GO:1903078">
    <property type="term" value="P:positive regulation of protein localization to plasma membrane"/>
    <property type="evidence" value="ECO:0000314"/>
    <property type="project" value="ParkinsonsUK-UCL"/>
</dbReference>
<dbReference type="GO" id="GO:0002092">
    <property type="term" value="P:positive regulation of receptor internalization"/>
    <property type="evidence" value="ECO:0007669"/>
    <property type="project" value="Ensembl"/>
</dbReference>
<dbReference type="GO" id="GO:0048643">
    <property type="term" value="P:positive regulation of skeletal muscle tissue development"/>
    <property type="evidence" value="ECO:0000315"/>
    <property type="project" value="CACAO"/>
</dbReference>
<dbReference type="GO" id="GO:0032212">
    <property type="term" value="P:positive regulation of telomere maintenance via telomerase"/>
    <property type="evidence" value="ECO:0000303"/>
    <property type="project" value="BHF-UCL"/>
</dbReference>
<dbReference type="GO" id="GO:0045944">
    <property type="term" value="P:positive regulation of transcription by RNA polymerase II"/>
    <property type="evidence" value="ECO:0000314"/>
    <property type="project" value="ParkinsonsUK-UCL"/>
</dbReference>
<dbReference type="GO" id="GO:0036342">
    <property type="term" value="P:post-anal tail morphogenesis"/>
    <property type="evidence" value="ECO:0000315"/>
    <property type="project" value="MGI"/>
</dbReference>
<dbReference type="GO" id="GO:0008104">
    <property type="term" value="P:protein localization"/>
    <property type="evidence" value="ECO:0000314"/>
    <property type="project" value="MGI"/>
</dbReference>
<dbReference type="GO" id="GO:0050770">
    <property type="term" value="P:regulation of axonogenesis"/>
    <property type="evidence" value="ECO:0000316"/>
    <property type="project" value="MGI"/>
</dbReference>
<dbReference type="GO" id="GO:0045595">
    <property type="term" value="P:regulation of cell differentiation"/>
    <property type="evidence" value="ECO:0000314"/>
    <property type="project" value="MGI"/>
</dbReference>
<dbReference type="GO" id="GO:0070507">
    <property type="term" value="P:regulation of microtubule cytoskeleton organization"/>
    <property type="evidence" value="ECO:0000316"/>
    <property type="project" value="MGI"/>
</dbReference>
<dbReference type="GO" id="GO:1905539">
    <property type="term" value="P:regulation of postsynapse to nucleus signaling pathway"/>
    <property type="evidence" value="ECO:0000314"/>
    <property type="project" value="SynGO"/>
</dbReference>
<dbReference type="GO" id="GO:1905606">
    <property type="term" value="P:regulation of presynapse assembly"/>
    <property type="evidence" value="ECO:0007669"/>
    <property type="project" value="Ensembl"/>
</dbReference>
<dbReference type="GO" id="GO:2001141">
    <property type="term" value="P:regulation of RNA biosynthetic process"/>
    <property type="evidence" value="ECO:0000314"/>
    <property type="project" value="MGI"/>
</dbReference>
<dbReference type="GO" id="GO:0062009">
    <property type="term" value="P:secondary palate development"/>
    <property type="evidence" value="ECO:0007669"/>
    <property type="project" value="Ensembl"/>
</dbReference>
<dbReference type="GO" id="GO:0007165">
    <property type="term" value="P:signal transduction"/>
    <property type="evidence" value="ECO:0000304"/>
    <property type="project" value="MGI"/>
</dbReference>
<dbReference type="GO" id="GO:0035914">
    <property type="term" value="P:skeletal muscle cell differentiation"/>
    <property type="evidence" value="ECO:0000316"/>
    <property type="project" value="MGI"/>
</dbReference>
<dbReference type="GO" id="GO:0048103">
    <property type="term" value="P:somatic stem cell division"/>
    <property type="evidence" value="ECO:0000314"/>
    <property type="project" value="MGI"/>
</dbReference>
<dbReference type="GO" id="GO:0001756">
    <property type="term" value="P:somitogenesis"/>
    <property type="evidence" value="ECO:0000315"/>
    <property type="project" value="MGI"/>
</dbReference>
<dbReference type="GO" id="GO:0021527">
    <property type="term" value="P:spinal cord association neuron differentiation"/>
    <property type="evidence" value="ECO:0000314"/>
    <property type="project" value="MGI"/>
</dbReference>
<dbReference type="GO" id="GO:0006366">
    <property type="term" value="P:transcription by RNA polymerase II"/>
    <property type="evidence" value="ECO:0000316"/>
    <property type="project" value="MGI"/>
</dbReference>
<dbReference type="GO" id="GO:0016055">
    <property type="term" value="P:Wnt signaling pathway"/>
    <property type="evidence" value="ECO:0000316"/>
    <property type="project" value="MGI"/>
</dbReference>
<dbReference type="GO" id="GO:0021874">
    <property type="term" value="P:Wnt signaling pathway involved in forebrain neuroblast division"/>
    <property type="evidence" value="ECO:0000315"/>
    <property type="project" value="MGI"/>
</dbReference>
<dbReference type="CDD" id="cd19335">
    <property type="entry name" value="Wnt_Wnt3_Wnt3a"/>
    <property type="match status" value="1"/>
</dbReference>
<dbReference type="FunFam" id="3.30.2460.20:FF:000001">
    <property type="entry name" value="Wnt homolog"/>
    <property type="match status" value="1"/>
</dbReference>
<dbReference type="Gene3D" id="3.30.2460.20">
    <property type="match status" value="1"/>
</dbReference>
<dbReference type="InterPro" id="IPR005817">
    <property type="entry name" value="Wnt"/>
</dbReference>
<dbReference type="InterPro" id="IPR009141">
    <property type="entry name" value="Wnt3"/>
</dbReference>
<dbReference type="InterPro" id="IPR043158">
    <property type="entry name" value="Wnt_C"/>
</dbReference>
<dbReference type="InterPro" id="IPR018161">
    <property type="entry name" value="Wnt_CS"/>
</dbReference>
<dbReference type="PANTHER" id="PTHR12027:SF88">
    <property type="entry name" value="PROTEIN WNT-3A"/>
    <property type="match status" value="1"/>
</dbReference>
<dbReference type="PANTHER" id="PTHR12027">
    <property type="entry name" value="WNT RELATED"/>
    <property type="match status" value="1"/>
</dbReference>
<dbReference type="Pfam" id="PF00110">
    <property type="entry name" value="wnt"/>
    <property type="match status" value="1"/>
</dbReference>
<dbReference type="PRINTS" id="PR01843">
    <property type="entry name" value="WNT3PROTEIN"/>
</dbReference>
<dbReference type="PRINTS" id="PR01349">
    <property type="entry name" value="WNTPROTEIN"/>
</dbReference>
<dbReference type="SMART" id="SM00097">
    <property type="entry name" value="WNT1"/>
    <property type="match status" value="1"/>
</dbReference>
<dbReference type="PROSITE" id="PS00246">
    <property type="entry name" value="WNT1"/>
    <property type="match status" value="1"/>
</dbReference>
<name>WNT3A_MOUSE</name>
<protein>
    <recommendedName>
        <fullName>Protein Wnt-3a</fullName>
    </recommendedName>
</protein>
<sequence>MAPLGYLLVLCSLKQALGSYPIWWSLAVGPQYSSLSTQPILCASIPGLVPKQLRFCRNYVEIMPSVAEGVKAGIQECQHQFRGRRWNCTTVSNSLAIFGPVLDKATRESAFVHAIASAGVAFAVTRSCAEGSAAICGCSSRLQGSPGEGWKWGGCSEDIEFGGMVSREFADARENRPDARSAMNRHNNEAGRQAIASHMHLKCKCHGLSGSCEVKTCWWSQPDFRTIGDFLKDKYDSASEMVVEKHRESRGWVETLRPRYTYFKVPTERDLVYYEASPNFCEPNPETGSFGTRDRTCNVSSHGIDGCDLLCCGRGHNARTERRREKCHCVFHWCCYVSCQECTRVYDVHTCK</sequence>
<evidence type="ECO:0000250" key="1">
    <source>
        <dbReference type="UniProtKB" id="P28026"/>
    </source>
</evidence>
<evidence type="ECO:0000250" key="2">
    <source>
        <dbReference type="UniProtKB" id="P56704"/>
    </source>
</evidence>
<evidence type="ECO:0000255" key="3"/>
<evidence type="ECO:0000269" key="4">
    <source>
    </source>
</evidence>
<evidence type="ECO:0000269" key="5">
    <source>
    </source>
</evidence>
<evidence type="ECO:0000269" key="6">
    <source>
    </source>
</evidence>
<evidence type="ECO:0000269" key="7">
    <source>
    </source>
</evidence>
<evidence type="ECO:0000269" key="8">
    <source>
    </source>
</evidence>
<evidence type="ECO:0000269" key="9">
    <source>
    </source>
</evidence>
<evidence type="ECO:0000269" key="10">
    <source>
    </source>
</evidence>
<evidence type="ECO:0000269" key="11">
    <source>
    </source>
</evidence>
<evidence type="ECO:0000305" key="12"/>
<gene>
    <name type="primary">Wnt3a</name>
    <name type="synonym">Wnt-3a</name>
</gene>